<dbReference type="EC" id="2.6.1.16" evidence="1"/>
<dbReference type="EMBL" id="BA000012">
    <property type="protein sequence ID" value="BAB48338.1"/>
    <property type="molecule type" value="Genomic_DNA"/>
</dbReference>
<dbReference type="RefSeq" id="WP_010909693.1">
    <property type="nucleotide sequence ID" value="NC_002678.2"/>
</dbReference>
<dbReference type="SMR" id="Q98LX5"/>
<dbReference type="KEGG" id="mlo:mll0833"/>
<dbReference type="PATRIC" id="fig|266835.9.peg.663"/>
<dbReference type="eggNOG" id="COG0449">
    <property type="taxonomic scope" value="Bacteria"/>
</dbReference>
<dbReference type="HOGENOM" id="CLU_012520_5_2_5"/>
<dbReference type="Proteomes" id="UP000000552">
    <property type="component" value="Chromosome"/>
</dbReference>
<dbReference type="GO" id="GO:0005829">
    <property type="term" value="C:cytosol"/>
    <property type="evidence" value="ECO:0007669"/>
    <property type="project" value="TreeGrafter"/>
</dbReference>
<dbReference type="GO" id="GO:0097367">
    <property type="term" value="F:carbohydrate derivative binding"/>
    <property type="evidence" value="ECO:0007669"/>
    <property type="project" value="InterPro"/>
</dbReference>
<dbReference type="GO" id="GO:0004360">
    <property type="term" value="F:glutamine-fructose-6-phosphate transaminase (isomerizing) activity"/>
    <property type="evidence" value="ECO:0007669"/>
    <property type="project" value="UniProtKB-UniRule"/>
</dbReference>
<dbReference type="GO" id="GO:0005975">
    <property type="term" value="P:carbohydrate metabolic process"/>
    <property type="evidence" value="ECO:0007669"/>
    <property type="project" value="UniProtKB-UniRule"/>
</dbReference>
<dbReference type="GO" id="GO:0006002">
    <property type="term" value="P:fructose 6-phosphate metabolic process"/>
    <property type="evidence" value="ECO:0007669"/>
    <property type="project" value="TreeGrafter"/>
</dbReference>
<dbReference type="GO" id="GO:0006487">
    <property type="term" value="P:protein N-linked glycosylation"/>
    <property type="evidence" value="ECO:0007669"/>
    <property type="project" value="TreeGrafter"/>
</dbReference>
<dbReference type="GO" id="GO:0006047">
    <property type="term" value="P:UDP-N-acetylglucosamine metabolic process"/>
    <property type="evidence" value="ECO:0007669"/>
    <property type="project" value="TreeGrafter"/>
</dbReference>
<dbReference type="CDD" id="cd00714">
    <property type="entry name" value="GFAT"/>
    <property type="match status" value="1"/>
</dbReference>
<dbReference type="CDD" id="cd05008">
    <property type="entry name" value="SIS_GlmS_GlmD_1"/>
    <property type="match status" value="1"/>
</dbReference>
<dbReference type="CDD" id="cd05009">
    <property type="entry name" value="SIS_GlmS_GlmD_2"/>
    <property type="match status" value="1"/>
</dbReference>
<dbReference type="FunFam" id="3.40.50.10490:FF:000001">
    <property type="entry name" value="Glutamine--fructose-6-phosphate aminotransferase [isomerizing]"/>
    <property type="match status" value="1"/>
</dbReference>
<dbReference type="FunFam" id="3.40.50.10490:FF:000002">
    <property type="entry name" value="Glutamine--fructose-6-phosphate aminotransferase [isomerizing]"/>
    <property type="match status" value="1"/>
</dbReference>
<dbReference type="FunFam" id="3.60.20.10:FF:000006">
    <property type="entry name" value="Glutamine--fructose-6-phosphate aminotransferase [isomerizing]"/>
    <property type="match status" value="1"/>
</dbReference>
<dbReference type="Gene3D" id="3.40.50.10490">
    <property type="entry name" value="Glucose-6-phosphate isomerase like protein, domain 1"/>
    <property type="match status" value="2"/>
</dbReference>
<dbReference type="Gene3D" id="3.60.20.10">
    <property type="entry name" value="Glutamine Phosphoribosylpyrophosphate, subunit 1, domain 1"/>
    <property type="match status" value="1"/>
</dbReference>
<dbReference type="HAMAP" id="MF_00164">
    <property type="entry name" value="GlmS"/>
    <property type="match status" value="1"/>
</dbReference>
<dbReference type="InterPro" id="IPR017932">
    <property type="entry name" value="GATase_2_dom"/>
</dbReference>
<dbReference type="InterPro" id="IPR005855">
    <property type="entry name" value="GFAT"/>
</dbReference>
<dbReference type="InterPro" id="IPR047084">
    <property type="entry name" value="GFAT_N"/>
</dbReference>
<dbReference type="InterPro" id="IPR035466">
    <property type="entry name" value="GlmS/AgaS_SIS"/>
</dbReference>
<dbReference type="InterPro" id="IPR035490">
    <property type="entry name" value="GlmS/FrlB_SIS"/>
</dbReference>
<dbReference type="InterPro" id="IPR029055">
    <property type="entry name" value="Ntn_hydrolases_N"/>
</dbReference>
<dbReference type="InterPro" id="IPR001347">
    <property type="entry name" value="SIS_dom"/>
</dbReference>
<dbReference type="InterPro" id="IPR046348">
    <property type="entry name" value="SIS_dom_sf"/>
</dbReference>
<dbReference type="NCBIfam" id="TIGR01135">
    <property type="entry name" value="glmS"/>
    <property type="match status" value="1"/>
</dbReference>
<dbReference type="NCBIfam" id="NF001484">
    <property type="entry name" value="PRK00331.1"/>
    <property type="match status" value="1"/>
</dbReference>
<dbReference type="PANTHER" id="PTHR10937">
    <property type="entry name" value="GLUCOSAMINE--FRUCTOSE-6-PHOSPHATE AMINOTRANSFERASE, ISOMERIZING"/>
    <property type="match status" value="1"/>
</dbReference>
<dbReference type="PANTHER" id="PTHR10937:SF0">
    <property type="entry name" value="GLUTAMINE--FRUCTOSE-6-PHOSPHATE TRANSAMINASE (ISOMERIZING)"/>
    <property type="match status" value="1"/>
</dbReference>
<dbReference type="Pfam" id="PF13522">
    <property type="entry name" value="GATase_6"/>
    <property type="match status" value="1"/>
</dbReference>
<dbReference type="Pfam" id="PF01380">
    <property type="entry name" value="SIS"/>
    <property type="match status" value="2"/>
</dbReference>
<dbReference type="SUPFAM" id="SSF56235">
    <property type="entry name" value="N-terminal nucleophile aminohydrolases (Ntn hydrolases)"/>
    <property type="match status" value="1"/>
</dbReference>
<dbReference type="SUPFAM" id="SSF53697">
    <property type="entry name" value="SIS domain"/>
    <property type="match status" value="1"/>
</dbReference>
<dbReference type="PROSITE" id="PS51278">
    <property type="entry name" value="GATASE_TYPE_2"/>
    <property type="match status" value="1"/>
</dbReference>
<dbReference type="PROSITE" id="PS51464">
    <property type="entry name" value="SIS"/>
    <property type="match status" value="2"/>
</dbReference>
<name>GLMS_RHILO</name>
<feature type="initiator methionine" description="Removed" evidence="1">
    <location>
        <position position="1"/>
    </location>
</feature>
<feature type="chain" id="PRO_0000135371" description="Glutamine--fructose-6-phosphate aminotransferase [isomerizing]">
    <location>
        <begin position="2"/>
        <end position="607"/>
    </location>
</feature>
<feature type="domain" description="Glutamine amidotransferase type-2" evidence="1">
    <location>
        <begin position="2"/>
        <end position="217"/>
    </location>
</feature>
<feature type="domain" description="SIS 1" evidence="1">
    <location>
        <begin position="283"/>
        <end position="422"/>
    </location>
</feature>
<feature type="domain" description="SIS 2" evidence="1">
    <location>
        <begin position="455"/>
        <end position="597"/>
    </location>
</feature>
<feature type="active site" description="Nucleophile; for GATase activity" evidence="1">
    <location>
        <position position="2"/>
    </location>
</feature>
<feature type="active site" description="For Fru-6P isomerization activity" evidence="1">
    <location>
        <position position="602"/>
    </location>
</feature>
<organism>
    <name type="scientific">Mesorhizobium japonicum (strain LMG 29417 / CECT 9101 / MAFF 303099)</name>
    <name type="common">Mesorhizobium loti (strain MAFF 303099)</name>
    <dbReference type="NCBI Taxonomy" id="266835"/>
    <lineage>
        <taxon>Bacteria</taxon>
        <taxon>Pseudomonadati</taxon>
        <taxon>Pseudomonadota</taxon>
        <taxon>Alphaproteobacteria</taxon>
        <taxon>Hyphomicrobiales</taxon>
        <taxon>Phyllobacteriaceae</taxon>
        <taxon>Mesorhizobium</taxon>
    </lineage>
</organism>
<protein>
    <recommendedName>
        <fullName evidence="1">Glutamine--fructose-6-phosphate aminotransferase [isomerizing]</fullName>
        <ecNumber evidence="1">2.6.1.16</ecNumber>
    </recommendedName>
    <alternativeName>
        <fullName evidence="1">D-fructose-6-phosphate amidotransferase</fullName>
    </alternativeName>
    <alternativeName>
        <fullName evidence="1">GFAT</fullName>
    </alternativeName>
    <alternativeName>
        <fullName evidence="1">Glucosamine-6-phosphate synthase</fullName>
    </alternativeName>
    <alternativeName>
        <fullName evidence="1">Hexosephosphate aminotransferase</fullName>
    </alternativeName>
    <alternativeName>
        <fullName evidence="1">L-glutamine--D-fructose-6-phosphate amidotransferase</fullName>
    </alternativeName>
</protein>
<proteinExistence type="inferred from homology"/>
<comment type="function">
    <text evidence="1">Catalyzes the first step in hexosamine metabolism, converting fructose-6P into glucosamine-6P using glutamine as a nitrogen source.</text>
</comment>
<comment type="catalytic activity">
    <reaction evidence="1">
        <text>D-fructose 6-phosphate + L-glutamine = D-glucosamine 6-phosphate + L-glutamate</text>
        <dbReference type="Rhea" id="RHEA:13237"/>
        <dbReference type="ChEBI" id="CHEBI:29985"/>
        <dbReference type="ChEBI" id="CHEBI:58359"/>
        <dbReference type="ChEBI" id="CHEBI:58725"/>
        <dbReference type="ChEBI" id="CHEBI:61527"/>
        <dbReference type="EC" id="2.6.1.16"/>
    </reaction>
</comment>
<comment type="subunit">
    <text evidence="1">Homodimer.</text>
</comment>
<comment type="subcellular location">
    <subcellularLocation>
        <location evidence="1">Cytoplasm</location>
    </subcellularLocation>
</comment>
<reference key="1">
    <citation type="journal article" date="2000" name="DNA Res.">
        <title>Complete genome structure of the nitrogen-fixing symbiotic bacterium Mesorhizobium loti.</title>
        <authorList>
            <person name="Kaneko T."/>
            <person name="Nakamura Y."/>
            <person name="Sato S."/>
            <person name="Asamizu E."/>
            <person name="Kato T."/>
            <person name="Sasamoto S."/>
            <person name="Watanabe A."/>
            <person name="Idesawa K."/>
            <person name="Ishikawa A."/>
            <person name="Kawashima K."/>
            <person name="Kimura T."/>
            <person name="Kishida Y."/>
            <person name="Kiyokawa C."/>
            <person name="Kohara M."/>
            <person name="Matsumoto M."/>
            <person name="Matsuno A."/>
            <person name="Mochizuki Y."/>
            <person name="Nakayama S."/>
            <person name="Nakazaki N."/>
            <person name="Shimpo S."/>
            <person name="Sugimoto M."/>
            <person name="Takeuchi C."/>
            <person name="Yamada M."/>
            <person name="Tabata S."/>
        </authorList>
    </citation>
    <scope>NUCLEOTIDE SEQUENCE [LARGE SCALE GENOMIC DNA]</scope>
    <source>
        <strain>LMG 29417 / CECT 9101 / MAFF 303099</strain>
    </source>
</reference>
<accession>Q98LX5</accession>
<evidence type="ECO:0000255" key="1">
    <source>
        <dbReference type="HAMAP-Rule" id="MF_00164"/>
    </source>
</evidence>
<sequence>MCGIVGIVGHSQVAPLIVDALKRLEYRGYDSAGVATIEHGELARRRAEGKLINLERRLKEEPLDGTIGIGHTRWATHGVPNETNAHPHFSDGVAIVHNGIIENFAELRDELVRDGYAFSSQTDTEVVAHLVARELAKGLKPVEAAHQALKRLEGAFALAIMFKGDEDLIVGARNGPPLAVGHGDGEMFLGSDAIALAPFTNSITYLEDGDWAVVRRDSVAIFDIDGKKVERKRQQSLSTSFMVDKGNRRHFMEKEIHEQPEVISHTLAHYVDFVSGVSKPLDLPFDFAKIGRLAISACGTAYLAGLIGKYWFERYARLPVDIDVASEFRYREMPLSANDAAFFISQSGETADTLASLRYCRKAGMKIGAVVNVRESTMARESDVVLPTLAGPEIGVASTKAFTCQLSVLASLAVRAGVARGVISQEQEKTLVRALSEAPRYANQVLKLEEQIERIARELSRYKDVLYLGRDTNFPLAMEGALKLKEISYIHAEGYAAGELKHGPIALIDENMPVIVIAPHDRIFEKTVSNMQEVAARGGKIILITDSKGAAQVSVKTMETIILPDVPEIISPIIYALPIQMLAYFAAVFMGTDVDQPRNLAKSVTVE</sequence>
<keyword id="KW-0032">Aminotransferase</keyword>
<keyword id="KW-0963">Cytoplasm</keyword>
<keyword id="KW-0315">Glutamine amidotransferase</keyword>
<keyword id="KW-0677">Repeat</keyword>
<keyword id="KW-0808">Transferase</keyword>
<gene>
    <name evidence="1" type="primary">glmS</name>
    <name type="ordered locus">mll0833</name>
</gene>